<feature type="chain" id="PRO_0000218454" description="Diacylglycerol kinase alpha">
    <location>
        <begin position="1"/>
        <end position="730"/>
    </location>
</feature>
<feature type="domain" description="EF-hand 1" evidence="5">
    <location>
        <begin position="111"/>
        <end position="146"/>
    </location>
</feature>
<feature type="domain" description="EF-hand 2" evidence="5">
    <location>
        <begin position="156"/>
        <end position="191"/>
    </location>
</feature>
<feature type="domain" description="DAGKc" evidence="6">
    <location>
        <begin position="368"/>
        <end position="501"/>
    </location>
</feature>
<feature type="zinc finger region" description="Phorbol-ester/DAG-type 1" evidence="4">
    <location>
        <begin position="206"/>
        <end position="254"/>
    </location>
</feature>
<feature type="zinc finger region" description="Phorbol-ester/DAG-type 2" evidence="4">
    <location>
        <begin position="270"/>
        <end position="320"/>
    </location>
</feature>
<feature type="binding site" evidence="5">
    <location>
        <position position="124"/>
    </location>
    <ligand>
        <name>Ca(2+)</name>
        <dbReference type="ChEBI" id="CHEBI:29108"/>
        <label>1</label>
    </ligand>
</feature>
<feature type="binding site" evidence="5">
    <location>
        <position position="126"/>
    </location>
    <ligand>
        <name>Ca(2+)</name>
        <dbReference type="ChEBI" id="CHEBI:29108"/>
        <label>1</label>
    </ligand>
</feature>
<feature type="binding site" evidence="5">
    <location>
        <position position="128"/>
    </location>
    <ligand>
        <name>Ca(2+)</name>
        <dbReference type="ChEBI" id="CHEBI:29108"/>
        <label>1</label>
    </ligand>
</feature>
<feature type="binding site" evidence="5">
    <location>
        <position position="135"/>
    </location>
    <ligand>
        <name>Ca(2+)</name>
        <dbReference type="ChEBI" id="CHEBI:29108"/>
        <label>1</label>
    </ligand>
</feature>
<feature type="binding site" evidence="5">
    <location>
        <position position="169"/>
    </location>
    <ligand>
        <name>Ca(2+)</name>
        <dbReference type="ChEBI" id="CHEBI:29108"/>
        <label>2</label>
    </ligand>
</feature>
<feature type="binding site" evidence="5">
    <location>
        <position position="171"/>
    </location>
    <ligand>
        <name>Ca(2+)</name>
        <dbReference type="ChEBI" id="CHEBI:29108"/>
        <label>2</label>
    </ligand>
</feature>
<feature type="binding site" evidence="5">
    <location>
        <position position="173"/>
    </location>
    <ligand>
        <name>Ca(2+)</name>
        <dbReference type="ChEBI" id="CHEBI:29108"/>
        <label>2</label>
    </ligand>
</feature>
<feature type="binding site" evidence="5">
    <location>
        <position position="175"/>
    </location>
    <ligand>
        <name>Ca(2+)</name>
        <dbReference type="ChEBI" id="CHEBI:29108"/>
        <label>2</label>
    </ligand>
</feature>
<feature type="binding site" evidence="5">
    <location>
        <position position="180"/>
    </location>
    <ligand>
        <name>Ca(2+)</name>
        <dbReference type="ChEBI" id="CHEBI:29108"/>
        <label>2</label>
    </ligand>
</feature>
<feature type="modified residue" description="N6-acetyllysine" evidence="2">
    <location>
        <position position="479"/>
    </location>
</feature>
<feature type="sequence conflict" description="In Ref. 1; AAC33483." evidence="7" ref="1">
    <original>G</original>
    <variation>V</variation>
    <location>
        <position position="317"/>
    </location>
</feature>
<feature type="sequence conflict" description="In Ref. 1; AAC33483." evidence="7" ref="1">
    <original>K</original>
    <variation>N</variation>
    <location>
        <position position="392"/>
    </location>
</feature>
<feature type="sequence conflict" description="In Ref. 1; AAC33483." evidence="7" ref="1">
    <original>N</original>
    <variation>D</variation>
    <location>
        <position position="398"/>
    </location>
</feature>
<proteinExistence type="evidence at protein level"/>
<sequence length="730" mass="82762">MAKEKGLISPEDFAQLQKYIEYSTKRVSDVLKVFDDGEMNRFCQGDAIGYLGFEQFMKMYLEMEEVPHHLCWALFWSFHTSQVAAEKTKSKANVICLSDVYCYFTLLEGGRPEDKLEFTFKLYDMDRNGILDSTEVEKIILQMMRVAEYLDWDVSELRPILQEMMREMDQDGSGSVSLDEWVRAGATTVPLLVLLGMDVTMKDDGNHIWRPKRFTRLVYCNLCEQSISLGKQGLSCNFCKYIVHDHCAMKAQPCEVSTYAKSRKDIGVQSHLWVRGGCHSGRCDRCQKKIRTYHSLTGLHCVWCHLEIHDDCLQAVGPECDCGLLRDHILPPCSIYPSVLVSGQECKHKTTDDTSLCTPEAFRIEPVSNTHPLLVFINLKSGGKQGQSVLWKFQYILNPRQVFDLKDGPEPGLRFFKDVPQFRILVCGGDGTVGWVLETIDKANFATVPPVAVLPLGTGNDLARCLRWGRGYEGENLRKILKDIELSKVVYLDRWFLEVIPQQNGEKSDPVPSQIINNYFSIGVDASIAHRFHLMREKYPEKFNSRMKNKLWYFEFATSESIFSTCKKLEESVTVEICGKLLDLSDLSLEGIAVLNIPSTHGGSNLWGDTKRPHGDTCEINQALGSAAKIITDPDILKTCVPDMSDKRLEVVGIEGAIEMGQIYTRLKSAGHRLAKCSEITFQTTKTLPMQIDGEPWMQAPCTIKITHKNQMPMLMGPPSNSYNFFGFWS</sequence>
<gene>
    <name type="primary">Dgka</name>
    <name type="synonym">Dagk1</name>
</gene>
<evidence type="ECO:0000250" key="1">
    <source>
        <dbReference type="UniProtKB" id="P20192"/>
    </source>
</evidence>
<evidence type="ECO:0000250" key="2">
    <source>
        <dbReference type="UniProtKB" id="P23743"/>
    </source>
</evidence>
<evidence type="ECO:0000250" key="3">
    <source>
        <dbReference type="UniProtKB" id="P51556"/>
    </source>
</evidence>
<evidence type="ECO:0000255" key="4">
    <source>
        <dbReference type="PROSITE-ProRule" id="PRU00226"/>
    </source>
</evidence>
<evidence type="ECO:0000255" key="5">
    <source>
        <dbReference type="PROSITE-ProRule" id="PRU00448"/>
    </source>
</evidence>
<evidence type="ECO:0000255" key="6">
    <source>
        <dbReference type="PROSITE-ProRule" id="PRU00783"/>
    </source>
</evidence>
<evidence type="ECO:0000305" key="7"/>
<comment type="function">
    <text evidence="2">Diacylglycerol kinase that converts diacylglycerol/DAG into phosphatidic acid/phosphatidate/PA and regulates the respective levels of these two bioactive lipids. Thereby, acts as a central switch between the signaling pathways activated by these second messengers with different cellular targets and opposite effects in numerous biological processes. Also plays an important role in the biosynthesis of complex lipids. Can also phosphorylate 1-alkyl-2-acylglycerol in vitro as efficiently as diacylglycerol provided it contains an arachidonoyl group. Also involved in the production of alkyl-lysophosphatidic acid, another bioactive lipid, through the phosphorylation of 1-alkyl-2-acetyl glycerol.</text>
</comment>
<comment type="catalytic activity">
    <reaction evidence="2">
        <text>a 1,2-diacyl-sn-glycerol + ATP = a 1,2-diacyl-sn-glycero-3-phosphate + ADP + H(+)</text>
        <dbReference type="Rhea" id="RHEA:10272"/>
        <dbReference type="ChEBI" id="CHEBI:15378"/>
        <dbReference type="ChEBI" id="CHEBI:17815"/>
        <dbReference type="ChEBI" id="CHEBI:30616"/>
        <dbReference type="ChEBI" id="CHEBI:58608"/>
        <dbReference type="ChEBI" id="CHEBI:456216"/>
        <dbReference type="EC" id="2.7.1.107"/>
    </reaction>
    <physiologicalReaction direction="left-to-right" evidence="2">
        <dbReference type="Rhea" id="RHEA:10273"/>
    </physiologicalReaction>
</comment>
<comment type="catalytic activity">
    <reaction evidence="3">
        <text>a 1-O-alkyl-sn-glycerol + ATP = a 1-O-alkyl-sn-glycero-3-phosphate + ADP + H(+)</text>
        <dbReference type="Rhea" id="RHEA:16937"/>
        <dbReference type="ChEBI" id="CHEBI:15378"/>
        <dbReference type="ChEBI" id="CHEBI:15850"/>
        <dbReference type="ChEBI" id="CHEBI:30616"/>
        <dbReference type="ChEBI" id="CHEBI:58014"/>
        <dbReference type="ChEBI" id="CHEBI:456216"/>
        <dbReference type="EC" id="2.7.1.93"/>
    </reaction>
    <physiologicalReaction direction="left-to-right" evidence="3">
        <dbReference type="Rhea" id="RHEA:16938"/>
    </physiologicalReaction>
</comment>
<comment type="catalytic activity">
    <reaction evidence="2">
        <text>1-O-alkyl-2-acyl-sn-glycerol + ATP = 1-O-alkyl-2-acyl-sn-glycero-3-phosphate + ADP + H(+)</text>
        <dbReference type="Rhea" id="RHEA:44072"/>
        <dbReference type="ChEBI" id="CHEBI:15378"/>
        <dbReference type="ChEBI" id="CHEBI:30616"/>
        <dbReference type="ChEBI" id="CHEBI:52595"/>
        <dbReference type="ChEBI" id="CHEBI:73332"/>
        <dbReference type="ChEBI" id="CHEBI:456216"/>
    </reaction>
    <physiologicalReaction direction="left-to-right" evidence="2">
        <dbReference type="Rhea" id="RHEA:44073"/>
    </physiologicalReaction>
</comment>
<comment type="catalytic activity">
    <reaction evidence="2">
        <text>1,2-dihexadecanoyl-sn-glycerol + ATP = 1,2-dihexadecanoyl-sn-glycero-3-phosphate + ADP + H(+)</text>
        <dbReference type="Rhea" id="RHEA:63324"/>
        <dbReference type="ChEBI" id="CHEBI:15378"/>
        <dbReference type="ChEBI" id="CHEBI:30616"/>
        <dbReference type="ChEBI" id="CHEBI:72859"/>
        <dbReference type="ChEBI" id="CHEBI:82929"/>
        <dbReference type="ChEBI" id="CHEBI:456216"/>
    </reaction>
    <physiologicalReaction direction="left-to-right" evidence="2">
        <dbReference type="Rhea" id="RHEA:63325"/>
    </physiologicalReaction>
</comment>
<comment type="catalytic activity">
    <reaction evidence="2">
        <text>1-hexadecanoyl-2-(9Z-octadecenoyl)-sn-glycerol + ATP = 1-hexadecanoyl-2-(9Z-octadecenoyl)-sn-glycero-3-phosphate + ADP + H(+)</text>
        <dbReference type="Rhea" id="RHEA:43416"/>
        <dbReference type="ChEBI" id="CHEBI:15378"/>
        <dbReference type="ChEBI" id="CHEBI:30616"/>
        <dbReference type="ChEBI" id="CHEBI:64839"/>
        <dbReference type="ChEBI" id="CHEBI:75466"/>
        <dbReference type="ChEBI" id="CHEBI:456216"/>
    </reaction>
    <physiologicalReaction direction="left-to-right" evidence="2">
        <dbReference type="Rhea" id="RHEA:43417"/>
    </physiologicalReaction>
</comment>
<comment type="catalytic activity">
    <reaction evidence="2">
        <text>2-(9Z-octadecenoyl)-glycerol + ATP = 2-(9Z-octadecenoyl)-sn-glycero-3-phosphate + ADP + H(+)</text>
        <dbReference type="Rhea" id="RHEA:63328"/>
        <dbReference type="ChEBI" id="CHEBI:15378"/>
        <dbReference type="ChEBI" id="CHEBI:30616"/>
        <dbReference type="ChEBI" id="CHEBI:73990"/>
        <dbReference type="ChEBI" id="CHEBI:77593"/>
        <dbReference type="ChEBI" id="CHEBI:456216"/>
    </reaction>
    <physiologicalReaction direction="left-to-right" evidence="2">
        <dbReference type="Rhea" id="RHEA:63329"/>
    </physiologicalReaction>
</comment>
<comment type="catalytic activity">
    <reaction evidence="2">
        <text>1,2-di-(9Z-octadecenoyl)-sn-glycerol + ATP = 1,2-di-(9Z-octadecenoyl)-sn-glycero-3-phosphate + ADP + H(+)</text>
        <dbReference type="Rhea" id="RHEA:40327"/>
        <dbReference type="ChEBI" id="CHEBI:15378"/>
        <dbReference type="ChEBI" id="CHEBI:30616"/>
        <dbReference type="ChEBI" id="CHEBI:52333"/>
        <dbReference type="ChEBI" id="CHEBI:74546"/>
        <dbReference type="ChEBI" id="CHEBI:456216"/>
    </reaction>
    <physiologicalReaction direction="left-to-right" evidence="2">
        <dbReference type="Rhea" id="RHEA:40328"/>
    </physiologicalReaction>
</comment>
<comment type="catalytic activity">
    <reaction evidence="2">
        <text>1-octadecanoyl-2-(5Z,8Z,11Z,14Z-eicosatetraenoyl)-sn-glycerol + ATP = 1-octadecanoyl-2-(5Z,8Z,11Z,14Z-eicosatetraenoyl)-sn-glycero-3-phosphate + ADP + H(+)</text>
        <dbReference type="Rhea" id="RHEA:40323"/>
        <dbReference type="ChEBI" id="CHEBI:15378"/>
        <dbReference type="ChEBI" id="CHEBI:30616"/>
        <dbReference type="ChEBI" id="CHEBI:75728"/>
        <dbReference type="ChEBI" id="CHEBI:77091"/>
        <dbReference type="ChEBI" id="CHEBI:456216"/>
    </reaction>
    <physiologicalReaction direction="left-to-right" evidence="2">
        <dbReference type="Rhea" id="RHEA:40324"/>
    </physiologicalReaction>
</comment>
<comment type="catalytic activity">
    <reaction evidence="1">
        <text>1,2-didecanoyl-sn-glycerol + ATP = 1,2-didecanoyl-sn-glycero-3-phosphate + ADP + H(+)</text>
        <dbReference type="Rhea" id="RHEA:43428"/>
        <dbReference type="ChEBI" id="CHEBI:15378"/>
        <dbReference type="ChEBI" id="CHEBI:18155"/>
        <dbReference type="ChEBI" id="CHEBI:30616"/>
        <dbReference type="ChEBI" id="CHEBI:78227"/>
        <dbReference type="ChEBI" id="CHEBI:456216"/>
    </reaction>
    <physiologicalReaction direction="left-to-right" evidence="1">
        <dbReference type="Rhea" id="RHEA:43429"/>
    </physiologicalReaction>
</comment>
<comment type="catalytic activity">
    <reaction evidence="3">
        <text>1-O-hexadecyl-2-acetyl-sn-glycerol + ATP = 1-O-hexadecyl-2-acetyl-sn-glycero-3-phosphate + ADP + H(+)</text>
        <dbReference type="Rhea" id="RHEA:41676"/>
        <dbReference type="ChEBI" id="CHEBI:15378"/>
        <dbReference type="ChEBI" id="CHEBI:30616"/>
        <dbReference type="ChEBI" id="CHEBI:75936"/>
        <dbReference type="ChEBI" id="CHEBI:78385"/>
        <dbReference type="ChEBI" id="CHEBI:456216"/>
    </reaction>
    <physiologicalReaction direction="left-to-right" evidence="3">
        <dbReference type="Rhea" id="RHEA:41677"/>
    </physiologicalReaction>
</comment>
<comment type="catalytic activity">
    <reaction evidence="2">
        <text>1-O-hexadecyl-2-(5Z,8Z,11Z,14Z-eicosatetraenoyl)-sn-glycerol + ATP = 1-O-hexadecyl-2-(5Z,8Z,11Z,14Z-eicosatetraenoyl)-sn-glycero-3-phosphate + ADP + H(+)</text>
        <dbReference type="Rhea" id="RHEA:40403"/>
        <dbReference type="ChEBI" id="CHEBI:15378"/>
        <dbReference type="ChEBI" id="CHEBI:30616"/>
        <dbReference type="ChEBI" id="CHEBI:77184"/>
        <dbReference type="ChEBI" id="CHEBI:77186"/>
        <dbReference type="ChEBI" id="CHEBI:456216"/>
    </reaction>
    <physiologicalReaction direction="left-to-right" evidence="2">
        <dbReference type="Rhea" id="RHEA:40404"/>
    </physiologicalReaction>
</comment>
<comment type="catalytic activity">
    <reaction evidence="2">
        <text>1-O-hexadecyl-2-(9Z-octadecenoyl)-sn-glycerol + ATP = 1-O-hexadecyl-2-(9Z-octadecenoyl)-sn-glycero-3-phosphate + ADP + H(+)</text>
        <dbReference type="Rhea" id="RHEA:40407"/>
        <dbReference type="ChEBI" id="CHEBI:15378"/>
        <dbReference type="ChEBI" id="CHEBI:30616"/>
        <dbReference type="ChEBI" id="CHEBI:77185"/>
        <dbReference type="ChEBI" id="CHEBI:77187"/>
        <dbReference type="ChEBI" id="CHEBI:456216"/>
    </reaction>
    <physiologicalReaction direction="left-to-right" evidence="2">
        <dbReference type="Rhea" id="RHEA:40408"/>
    </physiologicalReaction>
</comment>
<comment type="catalytic activity">
    <reaction evidence="3">
        <text>1-O-hexadecyl-sn-glycerol + ATP = 1-O-hexadecyl-sn-glycero-3-phosphate + ADP + H(+)</text>
        <dbReference type="Rhea" id="RHEA:41672"/>
        <dbReference type="ChEBI" id="CHEBI:15378"/>
        <dbReference type="ChEBI" id="CHEBI:30616"/>
        <dbReference type="ChEBI" id="CHEBI:34115"/>
        <dbReference type="ChEBI" id="CHEBI:77580"/>
        <dbReference type="ChEBI" id="CHEBI:456216"/>
    </reaction>
    <physiologicalReaction direction="left-to-right" evidence="3">
        <dbReference type="Rhea" id="RHEA:41673"/>
    </physiologicalReaction>
</comment>
<comment type="activity regulation">
    <text evidence="2">Stimulated by calcium and phosphatidylserine.</text>
</comment>
<comment type="pathway">
    <text evidence="2">Lipid metabolism; glycerolipid metabolism.</text>
</comment>
<comment type="subunit">
    <text evidence="2">Monomer.</text>
</comment>
<comment type="subcellular location">
    <subcellularLocation>
        <location evidence="2">Cytoplasm</location>
        <location evidence="2">Cytosol</location>
    </subcellularLocation>
</comment>
<comment type="similarity">
    <text evidence="7">Belongs to the eukaryotic diacylglycerol kinase family.</text>
</comment>
<dbReference type="EC" id="2.7.1.107" evidence="2"/>
<dbReference type="EC" id="2.7.1.93" evidence="3"/>
<dbReference type="EMBL" id="AF085219">
    <property type="protein sequence ID" value="AAC33483.1"/>
    <property type="molecule type" value="mRNA"/>
</dbReference>
<dbReference type="EMBL" id="BC006713">
    <property type="protein sequence ID" value="AAH06713.1"/>
    <property type="molecule type" value="mRNA"/>
</dbReference>
<dbReference type="CCDS" id="CCDS24290.1"/>
<dbReference type="RefSeq" id="NP_001345674.1">
    <property type="nucleotide sequence ID" value="NM_001358745.2"/>
</dbReference>
<dbReference type="RefSeq" id="NP_001345675.1">
    <property type="nucleotide sequence ID" value="NM_001358746.2"/>
</dbReference>
<dbReference type="RefSeq" id="NP_058091.2">
    <property type="nucleotide sequence ID" value="NM_016811.2"/>
</dbReference>
<dbReference type="RefSeq" id="XP_011241653.1">
    <property type="nucleotide sequence ID" value="XM_011243351.1"/>
</dbReference>
<dbReference type="RefSeq" id="XP_011241662.1">
    <property type="nucleotide sequence ID" value="XM_011243360.1"/>
</dbReference>
<dbReference type="RefSeq" id="XP_017169275.1">
    <property type="nucleotide sequence ID" value="XM_017313786.1"/>
</dbReference>
<dbReference type="RefSeq" id="XP_017169276.1">
    <property type="nucleotide sequence ID" value="XM_017313787.1"/>
</dbReference>
<dbReference type="RefSeq" id="XP_017169277.1">
    <property type="nucleotide sequence ID" value="XM_017313788.1"/>
</dbReference>
<dbReference type="RefSeq" id="XP_030100725.1">
    <property type="nucleotide sequence ID" value="XM_030244865.2"/>
</dbReference>
<dbReference type="BioGRID" id="199049">
    <property type="interactions" value="2"/>
</dbReference>
<dbReference type="FunCoup" id="O88673">
    <property type="interactions" value="560"/>
</dbReference>
<dbReference type="STRING" id="10090.ENSMUSP00000026414"/>
<dbReference type="iPTMnet" id="O88673"/>
<dbReference type="PhosphoSitePlus" id="O88673"/>
<dbReference type="PaxDb" id="10090-ENSMUSP00000026414"/>
<dbReference type="PeptideAtlas" id="O88673"/>
<dbReference type="ProteomicsDB" id="277321"/>
<dbReference type="Antibodypedia" id="27785">
    <property type="antibodies" value="466 antibodies from 32 providers"/>
</dbReference>
<dbReference type="DNASU" id="13139"/>
<dbReference type="Ensembl" id="ENSMUST00000026414.9">
    <property type="protein sequence ID" value="ENSMUSP00000026414.8"/>
    <property type="gene ID" value="ENSMUSG00000025357.9"/>
</dbReference>
<dbReference type="GeneID" id="13139"/>
<dbReference type="KEGG" id="mmu:13139"/>
<dbReference type="UCSC" id="uc007hoc.1">
    <property type="organism name" value="mouse"/>
</dbReference>
<dbReference type="AGR" id="MGI:102952"/>
<dbReference type="CTD" id="1606"/>
<dbReference type="MGI" id="MGI:102952">
    <property type="gene designation" value="Dgka"/>
</dbReference>
<dbReference type="VEuPathDB" id="HostDB:ENSMUSG00000025357"/>
<dbReference type="eggNOG" id="KOG1169">
    <property type="taxonomic scope" value="Eukaryota"/>
</dbReference>
<dbReference type="GeneTree" id="ENSGT00940000157144"/>
<dbReference type="HOGENOM" id="CLU_003770_1_1_1"/>
<dbReference type="InParanoid" id="O88673"/>
<dbReference type="OMA" id="HERCACK"/>
<dbReference type="OrthoDB" id="242257at2759"/>
<dbReference type="PhylomeDB" id="O88673"/>
<dbReference type="TreeFam" id="TF313104"/>
<dbReference type="BRENDA" id="2.7.1.107">
    <property type="organism ID" value="3474"/>
</dbReference>
<dbReference type="Reactome" id="R-MMU-114508">
    <property type="pathway name" value="Effects of PIP2 hydrolysis"/>
</dbReference>
<dbReference type="UniPathway" id="UPA00230"/>
<dbReference type="BioGRID-ORCS" id="13139">
    <property type="hits" value="2 hits in 77 CRISPR screens"/>
</dbReference>
<dbReference type="ChiTaRS" id="Dgka">
    <property type="organism name" value="mouse"/>
</dbReference>
<dbReference type="PRO" id="PR:O88673"/>
<dbReference type="Proteomes" id="UP000000589">
    <property type="component" value="Chromosome 10"/>
</dbReference>
<dbReference type="RNAct" id="O88673">
    <property type="molecule type" value="protein"/>
</dbReference>
<dbReference type="Bgee" id="ENSMUSG00000025357">
    <property type="expression patterns" value="Expressed in thymus and 257 other cell types or tissues"/>
</dbReference>
<dbReference type="ExpressionAtlas" id="O88673">
    <property type="expression patterns" value="baseline and differential"/>
</dbReference>
<dbReference type="GO" id="GO:0005829">
    <property type="term" value="C:cytosol"/>
    <property type="evidence" value="ECO:0000314"/>
    <property type="project" value="MGI"/>
</dbReference>
<dbReference type="GO" id="GO:0005886">
    <property type="term" value="C:plasma membrane"/>
    <property type="evidence" value="ECO:0000314"/>
    <property type="project" value="MGI"/>
</dbReference>
<dbReference type="GO" id="GO:0047649">
    <property type="term" value="F:alkylglycerol kinase activity"/>
    <property type="evidence" value="ECO:0007669"/>
    <property type="project" value="RHEA"/>
</dbReference>
<dbReference type="GO" id="GO:0005524">
    <property type="term" value="F:ATP binding"/>
    <property type="evidence" value="ECO:0007669"/>
    <property type="project" value="UniProtKB-KW"/>
</dbReference>
<dbReference type="GO" id="GO:0004143">
    <property type="term" value="F:ATP-dependent diacylglycerol kinase activity"/>
    <property type="evidence" value="ECO:0000314"/>
    <property type="project" value="MGI"/>
</dbReference>
<dbReference type="GO" id="GO:0005509">
    <property type="term" value="F:calcium ion binding"/>
    <property type="evidence" value="ECO:0007669"/>
    <property type="project" value="InterPro"/>
</dbReference>
<dbReference type="GO" id="GO:0005543">
    <property type="term" value="F:phospholipid binding"/>
    <property type="evidence" value="ECO:0000314"/>
    <property type="project" value="MGI"/>
</dbReference>
<dbReference type="GO" id="GO:0008270">
    <property type="term" value="F:zinc ion binding"/>
    <property type="evidence" value="ECO:0007669"/>
    <property type="project" value="UniProtKB-KW"/>
</dbReference>
<dbReference type="GO" id="GO:0046339">
    <property type="term" value="P:diacylglycerol metabolic process"/>
    <property type="evidence" value="ECO:0000250"/>
    <property type="project" value="UniProtKB"/>
</dbReference>
<dbReference type="GO" id="GO:0046834">
    <property type="term" value="P:lipid phosphorylation"/>
    <property type="evidence" value="ECO:0000250"/>
    <property type="project" value="UniProtKB"/>
</dbReference>
<dbReference type="GO" id="GO:0006654">
    <property type="term" value="P:phosphatidic acid biosynthetic process"/>
    <property type="evidence" value="ECO:0000250"/>
    <property type="project" value="UniProtKB"/>
</dbReference>
<dbReference type="GO" id="GO:0007200">
    <property type="term" value="P:phospholipase C-activating G protein-coupled receptor signaling pathway"/>
    <property type="evidence" value="ECO:0007669"/>
    <property type="project" value="InterPro"/>
</dbReference>
<dbReference type="CDD" id="cd20890">
    <property type="entry name" value="C1_DGKalpha_rpt2"/>
    <property type="match status" value="1"/>
</dbReference>
<dbReference type="CDD" id="cd00051">
    <property type="entry name" value="EFh"/>
    <property type="match status" value="1"/>
</dbReference>
<dbReference type="FunFam" id="1.10.238.10:FF:000017">
    <property type="entry name" value="Diacylglycerol kinase"/>
    <property type="match status" value="1"/>
</dbReference>
<dbReference type="FunFam" id="1.10.238.110:FF:000004">
    <property type="entry name" value="Diacylglycerol kinase"/>
    <property type="match status" value="1"/>
</dbReference>
<dbReference type="FunFam" id="2.60.200.40:FF:000003">
    <property type="entry name" value="Diacylglycerol kinase"/>
    <property type="match status" value="1"/>
</dbReference>
<dbReference type="FunFam" id="3.30.60.20:FF:000039">
    <property type="entry name" value="Diacylglycerol kinase"/>
    <property type="match status" value="1"/>
</dbReference>
<dbReference type="FunFam" id="3.40.50.10330:FF:000003">
    <property type="entry name" value="Diacylglycerol kinase"/>
    <property type="match status" value="1"/>
</dbReference>
<dbReference type="Gene3D" id="2.60.200.40">
    <property type="match status" value="1"/>
</dbReference>
<dbReference type="Gene3D" id="3.30.60.20">
    <property type="match status" value="2"/>
</dbReference>
<dbReference type="Gene3D" id="1.10.238.110">
    <property type="entry name" value="Diacylglycerol kinase alpha"/>
    <property type="match status" value="1"/>
</dbReference>
<dbReference type="Gene3D" id="1.10.238.10">
    <property type="entry name" value="EF-hand"/>
    <property type="match status" value="1"/>
</dbReference>
<dbReference type="Gene3D" id="3.40.50.10330">
    <property type="entry name" value="Probable inorganic polyphosphate/atp-NAD kinase, domain 1"/>
    <property type="match status" value="1"/>
</dbReference>
<dbReference type="InterPro" id="IPR017438">
    <property type="entry name" value="ATP-NAD_kinase_N"/>
</dbReference>
<dbReference type="InterPro" id="IPR046349">
    <property type="entry name" value="C1-like_sf"/>
</dbReference>
<dbReference type="InterPro" id="IPR047469">
    <property type="entry name" value="C1_DGKalpha_rpt2"/>
</dbReference>
<dbReference type="InterPro" id="IPR029477">
    <property type="entry name" value="DAG_kinase_typeI_N"/>
</dbReference>
<dbReference type="InterPro" id="IPR037607">
    <property type="entry name" value="DGK"/>
</dbReference>
<dbReference type="InterPro" id="IPR038199">
    <property type="entry name" value="DGK_typeI_N_sf"/>
</dbReference>
<dbReference type="InterPro" id="IPR000756">
    <property type="entry name" value="Diacylglycerol_kin_accessory"/>
</dbReference>
<dbReference type="InterPro" id="IPR001206">
    <property type="entry name" value="Diacylglycerol_kinase_cat_dom"/>
</dbReference>
<dbReference type="InterPro" id="IPR011992">
    <property type="entry name" value="EF-hand-dom_pair"/>
</dbReference>
<dbReference type="InterPro" id="IPR018247">
    <property type="entry name" value="EF_Hand_1_Ca_BS"/>
</dbReference>
<dbReference type="InterPro" id="IPR002048">
    <property type="entry name" value="EF_hand_dom"/>
</dbReference>
<dbReference type="InterPro" id="IPR016064">
    <property type="entry name" value="NAD/diacylglycerol_kinase_sf"/>
</dbReference>
<dbReference type="InterPro" id="IPR002219">
    <property type="entry name" value="PE/DAG-bd"/>
</dbReference>
<dbReference type="PANTHER" id="PTHR11255">
    <property type="entry name" value="DIACYLGLYCEROL KINASE"/>
    <property type="match status" value="1"/>
</dbReference>
<dbReference type="PANTHER" id="PTHR11255:SF38">
    <property type="entry name" value="DIACYLGLYCEROL KINASE ALPHA"/>
    <property type="match status" value="1"/>
</dbReference>
<dbReference type="Pfam" id="PF00130">
    <property type="entry name" value="C1_1"/>
    <property type="match status" value="2"/>
</dbReference>
<dbReference type="Pfam" id="PF14513">
    <property type="entry name" value="DAG_kinase_N"/>
    <property type="match status" value="1"/>
</dbReference>
<dbReference type="Pfam" id="PF00609">
    <property type="entry name" value="DAGK_acc"/>
    <property type="match status" value="1"/>
</dbReference>
<dbReference type="Pfam" id="PF00781">
    <property type="entry name" value="DAGK_cat"/>
    <property type="match status" value="1"/>
</dbReference>
<dbReference type="Pfam" id="PF13499">
    <property type="entry name" value="EF-hand_7"/>
    <property type="match status" value="1"/>
</dbReference>
<dbReference type="SMART" id="SM00109">
    <property type="entry name" value="C1"/>
    <property type="match status" value="2"/>
</dbReference>
<dbReference type="SMART" id="SM00045">
    <property type="entry name" value="DAGKa"/>
    <property type="match status" value="1"/>
</dbReference>
<dbReference type="SMART" id="SM00046">
    <property type="entry name" value="DAGKc"/>
    <property type="match status" value="1"/>
</dbReference>
<dbReference type="SMART" id="SM00054">
    <property type="entry name" value="EFh"/>
    <property type="match status" value="2"/>
</dbReference>
<dbReference type="SUPFAM" id="SSF57889">
    <property type="entry name" value="Cysteine-rich domain"/>
    <property type="match status" value="2"/>
</dbReference>
<dbReference type="SUPFAM" id="SSF47473">
    <property type="entry name" value="EF-hand"/>
    <property type="match status" value="2"/>
</dbReference>
<dbReference type="SUPFAM" id="SSF111331">
    <property type="entry name" value="NAD kinase/diacylglycerol kinase-like"/>
    <property type="match status" value="1"/>
</dbReference>
<dbReference type="PROSITE" id="PS50146">
    <property type="entry name" value="DAGK"/>
    <property type="match status" value="1"/>
</dbReference>
<dbReference type="PROSITE" id="PS00018">
    <property type="entry name" value="EF_HAND_1"/>
    <property type="match status" value="2"/>
</dbReference>
<dbReference type="PROSITE" id="PS50222">
    <property type="entry name" value="EF_HAND_2"/>
    <property type="match status" value="2"/>
</dbReference>
<dbReference type="PROSITE" id="PS00479">
    <property type="entry name" value="ZF_DAG_PE_1"/>
    <property type="match status" value="2"/>
</dbReference>
<dbReference type="PROSITE" id="PS50081">
    <property type="entry name" value="ZF_DAG_PE_2"/>
    <property type="match status" value="2"/>
</dbReference>
<protein>
    <recommendedName>
        <fullName>Diacylglycerol kinase alpha</fullName>
        <shortName>DAG kinase alpha</shortName>
        <ecNumber evidence="2">2.7.1.107</ecNumber>
        <ecNumber evidence="3">2.7.1.93</ecNumber>
    </recommendedName>
    <alternativeName>
        <fullName>80 kDa diacylglycerol kinase</fullName>
    </alternativeName>
    <alternativeName>
        <fullName>Diglyceride kinase alpha</fullName>
        <shortName>DGK-alpha</shortName>
    </alternativeName>
</protein>
<name>DGKA_MOUSE</name>
<accession>O88673</accession>
<accession>Q922X2</accession>
<keyword id="KW-0007">Acetylation</keyword>
<keyword id="KW-0067">ATP-binding</keyword>
<keyword id="KW-0106">Calcium</keyword>
<keyword id="KW-0963">Cytoplasm</keyword>
<keyword id="KW-0418">Kinase</keyword>
<keyword id="KW-0443">Lipid metabolism</keyword>
<keyword id="KW-0479">Metal-binding</keyword>
<keyword id="KW-0547">Nucleotide-binding</keyword>
<keyword id="KW-1185">Reference proteome</keyword>
<keyword id="KW-0677">Repeat</keyword>
<keyword id="KW-0808">Transferase</keyword>
<keyword id="KW-0862">Zinc</keyword>
<keyword id="KW-0863">Zinc-finger</keyword>
<reference key="1">
    <citation type="submission" date="1998-08" db="EMBL/GenBank/DDBJ databases">
        <authorList>
            <person name="Sanjuan M.A."/>
            <person name="Carrera A.C."/>
            <person name="Merida I."/>
        </authorList>
    </citation>
    <scope>NUCLEOTIDE SEQUENCE [MRNA]</scope>
</reference>
<reference key="2">
    <citation type="journal article" date="2004" name="Genome Res.">
        <title>The status, quality, and expansion of the NIH full-length cDNA project: the Mammalian Gene Collection (MGC).</title>
        <authorList>
            <consortium name="The MGC Project Team"/>
        </authorList>
    </citation>
    <scope>NUCLEOTIDE SEQUENCE [LARGE SCALE MRNA]</scope>
</reference>
<reference key="3">
    <citation type="journal article" date="2010" name="Cell">
        <title>A tissue-specific atlas of mouse protein phosphorylation and expression.</title>
        <authorList>
            <person name="Huttlin E.L."/>
            <person name="Jedrychowski M.P."/>
            <person name="Elias J.E."/>
            <person name="Goswami T."/>
            <person name="Rad R."/>
            <person name="Beausoleil S.A."/>
            <person name="Villen J."/>
            <person name="Haas W."/>
            <person name="Sowa M.E."/>
            <person name="Gygi S.P."/>
        </authorList>
    </citation>
    <scope>IDENTIFICATION BY MASS SPECTROMETRY [LARGE SCALE ANALYSIS]</scope>
    <source>
        <tissue>Lung</tissue>
        <tissue>Spleen</tissue>
    </source>
</reference>
<organism>
    <name type="scientific">Mus musculus</name>
    <name type="common">Mouse</name>
    <dbReference type="NCBI Taxonomy" id="10090"/>
    <lineage>
        <taxon>Eukaryota</taxon>
        <taxon>Metazoa</taxon>
        <taxon>Chordata</taxon>
        <taxon>Craniata</taxon>
        <taxon>Vertebrata</taxon>
        <taxon>Euteleostomi</taxon>
        <taxon>Mammalia</taxon>
        <taxon>Eutheria</taxon>
        <taxon>Euarchontoglires</taxon>
        <taxon>Glires</taxon>
        <taxon>Rodentia</taxon>
        <taxon>Myomorpha</taxon>
        <taxon>Muroidea</taxon>
        <taxon>Muridae</taxon>
        <taxon>Murinae</taxon>
        <taxon>Mus</taxon>
        <taxon>Mus</taxon>
    </lineage>
</organism>